<dbReference type="EC" id="2.1.1.-" evidence="1"/>
<dbReference type="EMBL" id="BX548175">
    <property type="protein sequence ID" value="CAE21605.1"/>
    <property type="molecule type" value="Genomic_DNA"/>
</dbReference>
<dbReference type="RefSeq" id="WP_011130798.1">
    <property type="nucleotide sequence ID" value="NC_005071.1"/>
</dbReference>
<dbReference type="SMR" id="Q7TUS7"/>
<dbReference type="KEGG" id="pmt:PMT_1430"/>
<dbReference type="eggNOG" id="COG2264">
    <property type="taxonomic scope" value="Bacteria"/>
</dbReference>
<dbReference type="HOGENOM" id="CLU_049382_0_1_3"/>
<dbReference type="OrthoDB" id="9785995at2"/>
<dbReference type="Proteomes" id="UP000001423">
    <property type="component" value="Chromosome"/>
</dbReference>
<dbReference type="GO" id="GO:0005737">
    <property type="term" value="C:cytoplasm"/>
    <property type="evidence" value="ECO:0007669"/>
    <property type="project" value="UniProtKB-SubCell"/>
</dbReference>
<dbReference type="GO" id="GO:0016279">
    <property type="term" value="F:protein-lysine N-methyltransferase activity"/>
    <property type="evidence" value="ECO:0007669"/>
    <property type="project" value="RHEA"/>
</dbReference>
<dbReference type="GO" id="GO:0032259">
    <property type="term" value="P:methylation"/>
    <property type="evidence" value="ECO:0007669"/>
    <property type="project" value="UniProtKB-KW"/>
</dbReference>
<dbReference type="CDD" id="cd02440">
    <property type="entry name" value="AdoMet_MTases"/>
    <property type="match status" value="1"/>
</dbReference>
<dbReference type="Gene3D" id="3.40.50.150">
    <property type="entry name" value="Vaccinia Virus protein VP39"/>
    <property type="match status" value="1"/>
</dbReference>
<dbReference type="HAMAP" id="MF_00735">
    <property type="entry name" value="Methyltr_PrmA"/>
    <property type="match status" value="1"/>
</dbReference>
<dbReference type="InterPro" id="IPR050078">
    <property type="entry name" value="Ribosomal_L11_MeTrfase_PrmA"/>
</dbReference>
<dbReference type="InterPro" id="IPR004498">
    <property type="entry name" value="Ribosomal_PrmA_MeTrfase"/>
</dbReference>
<dbReference type="InterPro" id="IPR029063">
    <property type="entry name" value="SAM-dependent_MTases_sf"/>
</dbReference>
<dbReference type="NCBIfam" id="TIGR00406">
    <property type="entry name" value="prmA"/>
    <property type="match status" value="1"/>
</dbReference>
<dbReference type="PANTHER" id="PTHR43648">
    <property type="entry name" value="ELECTRON TRANSFER FLAVOPROTEIN BETA SUBUNIT LYSINE METHYLTRANSFERASE"/>
    <property type="match status" value="1"/>
</dbReference>
<dbReference type="PANTHER" id="PTHR43648:SF1">
    <property type="entry name" value="ELECTRON TRANSFER FLAVOPROTEIN BETA SUBUNIT LYSINE METHYLTRANSFERASE"/>
    <property type="match status" value="1"/>
</dbReference>
<dbReference type="Pfam" id="PF06325">
    <property type="entry name" value="PrmA"/>
    <property type="match status" value="1"/>
</dbReference>
<dbReference type="SUPFAM" id="SSF53335">
    <property type="entry name" value="S-adenosyl-L-methionine-dependent methyltransferases"/>
    <property type="match status" value="1"/>
</dbReference>
<keyword id="KW-0963">Cytoplasm</keyword>
<keyword id="KW-0489">Methyltransferase</keyword>
<keyword id="KW-1185">Reference proteome</keyword>
<keyword id="KW-0949">S-adenosyl-L-methionine</keyword>
<keyword id="KW-0808">Transferase</keyword>
<protein>
    <recommendedName>
        <fullName evidence="1">Ribosomal protein L11 methyltransferase</fullName>
        <shortName evidence="1">L11 Mtase</shortName>
        <ecNumber evidence="1">2.1.1.-</ecNumber>
    </recommendedName>
</protein>
<sequence length="301" mass="33178">MNFAAALRWWRLSLPIADELEESLIWKLTDLGLCRLAVQHAPENSERTLLAWLPSSEWSESDRDQLMANLRPLAEPFGLKLANPTWCEVADEDWSLNWKQDWQPDPVGQRLLILPAWLDLPQEYADRFVVRLDPGSAFGTGSHPSTRLCLEALERNPPLGLRVADLGCGSGVLGFAALAFGARQVLAADTDCQAVCASRANTELNQLDLDRLRVVHGSVEALSAQLEGQTVDLLLCNILAPVIEVLAPSFDQLLSANGRGLLSGLLVKQAPRLQMVLEALGWRVNCLTEQGCWGLLDVSKR</sequence>
<comment type="function">
    <text evidence="1">Methylates ribosomal protein L11.</text>
</comment>
<comment type="catalytic activity">
    <reaction evidence="1">
        <text>L-lysyl-[protein] + 3 S-adenosyl-L-methionine = N(6),N(6),N(6)-trimethyl-L-lysyl-[protein] + 3 S-adenosyl-L-homocysteine + 3 H(+)</text>
        <dbReference type="Rhea" id="RHEA:54192"/>
        <dbReference type="Rhea" id="RHEA-COMP:9752"/>
        <dbReference type="Rhea" id="RHEA-COMP:13826"/>
        <dbReference type="ChEBI" id="CHEBI:15378"/>
        <dbReference type="ChEBI" id="CHEBI:29969"/>
        <dbReference type="ChEBI" id="CHEBI:57856"/>
        <dbReference type="ChEBI" id="CHEBI:59789"/>
        <dbReference type="ChEBI" id="CHEBI:61961"/>
    </reaction>
</comment>
<comment type="subcellular location">
    <subcellularLocation>
        <location evidence="1">Cytoplasm</location>
    </subcellularLocation>
</comment>
<comment type="similarity">
    <text evidence="1">Belongs to the methyltransferase superfamily. PrmA family.</text>
</comment>
<feature type="chain" id="PRO_0000192290" description="Ribosomal protein L11 methyltransferase">
    <location>
        <begin position="1"/>
        <end position="301"/>
    </location>
</feature>
<feature type="binding site" evidence="1">
    <location>
        <position position="146"/>
    </location>
    <ligand>
        <name>S-adenosyl-L-methionine</name>
        <dbReference type="ChEBI" id="CHEBI:59789"/>
    </ligand>
</feature>
<feature type="binding site" evidence="1">
    <location>
        <position position="167"/>
    </location>
    <ligand>
        <name>S-adenosyl-L-methionine</name>
        <dbReference type="ChEBI" id="CHEBI:59789"/>
    </ligand>
</feature>
<feature type="binding site" evidence="1">
    <location>
        <position position="189"/>
    </location>
    <ligand>
        <name>S-adenosyl-L-methionine</name>
        <dbReference type="ChEBI" id="CHEBI:59789"/>
    </ligand>
</feature>
<feature type="binding site" evidence="1">
    <location>
        <position position="237"/>
    </location>
    <ligand>
        <name>S-adenosyl-L-methionine</name>
        <dbReference type="ChEBI" id="CHEBI:59789"/>
    </ligand>
</feature>
<reference key="1">
    <citation type="journal article" date="2003" name="Nature">
        <title>Genome divergence in two Prochlorococcus ecotypes reflects oceanic niche differentiation.</title>
        <authorList>
            <person name="Rocap G."/>
            <person name="Larimer F.W."/>
            <person name="Lamerdin J.E."/>
            <person name="Malfatti S."/>
            <person name="Chain P."/>
            <person name="Ahlgren N.A."/>
            <person name="Arellano A."/>
            <person name="Coleman M."/>
            <person name="Hauser L."/>
            <person name="Hess W.R."/>
            <person name="Johnson Z.I."/>
            <person name="Land M.L."/>
            <person name="Lindell D."/>
            <person name="Post A.F."/>
            <person name="Regala W."/>
            <person name="Shah M."/>
            <person name="Shaw S.L."/>
            <person name="Steglich C."/>
            <person name="Sullivan M.B."/>
            <person name="Ting C.S."/>
            <person name="Tolonen A."/>
            <person name="Webb E.A."/>
            <person name="Zinser E.R."/>
            <person name="Chisholm S.W."/>
        </authorList>
    </citation>
    <scope>NUCLEOTIDE SEQUENCE [LARGE SCALE GENOMIC DNA]</scope>
    <source>
        <strain>MIT 9313</strain>
    </source>
</reference>
<name>PRMA_PROMM</name>
<organism>
    <name type="scientific">Prochlorococcus marinus (strain MIT 9313)</name>
    <dbReference type="NCBI Taxonomy" id="74547"/>
    <lineage>
        <taxon>Bacteria</taxon>
        <taxon>Bacillati</taxon>
        <taxon>Cyanobacteriota</taxon>
        <taxon>Cyanophyceae</taxon>
        <taxon>Synechococcales</taxon>
        <taxon>Prochlorococcaceae</taxon>
        <taxon>Prochlorococcus</taxon>
    </lineage>
</organism>
<evidence type="ECO:0000255" key="1">
    <source>
        <dbReference type="HAMAP-Rule" id="MF_00735"/>
    </source>
</evidence>
<accession>Q7TUS7</accession>
<proteinExistence type="inferred from homology"/>
<gene>
    <name evidence="1" type="primary">prmA</name>
    <name type="ordered locus">PMT_1430</name>
</gene>